<reference key="1">
    <citation type="journal article" date="2009" name="Environ. Microbiol.">
        <title>Genome sequence of Desulfobacterium autotrophicum HRM2, a marine sulfate reducer oxidizing organic carbon completely to carbon dioxide.</title>
        <authorList>
            <person name="Strittmatter A.W."/>
            <person name="Liesegang H."/>
            <person name="Rabus R."/>
            <person name="Decker I."/>
            <person name="Amann J."/>
            <person name="Andres S."/>
            <person name="Henne A."/>
            <person name="Fricke W.F."/>
            <person name="Martinez-Arias R."/>
            <person name="Bartels D."/>
            <person name="Goesmann A."/>
            <person name="Krause L."/>
            <person name="Puehler A."/>
            <person name="Klenk H.P."/>
            <person name="Richter M."/>
            <person name="Schuler M."/>
            <person name="Gloeckner F.O."/>
            <person name="Meyerdierks A."/>
            <person name="Gottschalk G."/>
            <person name="Amann R."/>
        </authorList>
    </citation>
    <scope>NUCLEOTIDE SEQUENCE [LARGE SCALE GENOMIC DNA]</scope>
    <source>
        <strain>ATCC 43914 / DSM 3382 / VKM B-1955 / HRM2</strain>
    </source>
</reference>
<feature type="chain" id="PRO_1000214886" description="Large ribosomal subunit protein bL21">
    <location>
        <begin position="1"/>
        <end position="103"/>
    </location>
</feature>
<sequence>MYAVIKTGGKQYKVQEGDTLRVEKLEGTENGEIEFNDVLMFSDGENVTLGQPAIEDAIVKGHILEQGKGKKVLIFKFKRRKGYRNLRGHRQQYTAVKIDSILV</sequence>
<name>RL21_DESAH</name>
<organism>
    <name type="scientific">Desulforapulum autotrophicum (strain ATCC 43914 / DSM 3382 / VKM B-1955 / HRM2)</name>
    <name type="common">Desulfobacterium autotrophicum</name>
    <dbReference type="NCBI Taxonomy" id="177437"/>
    <lineage>
        <taxon>Bacteria</taxon>
        <taxon>Pseudomonadati</taxon>
        <taxon>Thermodesulfobacteriota</taxon>
        <taxon>Desulfobacteria</taxon>
        <taxon>Desulfobacterales</taxon>
        <taxon>Desulfobacteraceae</taxon>
        <taxon>Desulforapulum</taxon>
    </lineage>
</organism>
<comment type="function">
    <text evidence="1">This protein binds to 23S rRNA in the presence of protein L20.</text>
</comment>
<comment type="subunit">
    <text evidence="1">Part of the 50S ribosomal subunit. Contacts protein L20.</text>
</comment>
<comment type="similarity">
    <text evidence="1">Belongs to the bacterial ribosomal protein bL21 family.</text>
</comment>
<gene>
    <name evidence="1" type="primary">rplU</name>
    <name type="ordered locus">HRM2_31700</name>
</gene>
<evidence type="ECO:0000255" key="1">
    <source>
        <dbReference type="HAMAP-Rule" id="MF_01363"/>
    </source>
</evidence>
<evidence type="ECO:0000305" key="2"/>
<protein>
    <recommendedName>
        <fullName evidence="1">Large ribosomal subunit protein bL21</fullName>
    </recommendedName>
    <alternativeName>
        <fullName evidence="2">50S ribosomal protein L21</fullName>
    </alternativeName>
</protein>
<dbReference type="EMBL" id="CP001087">
    <property type="protein sequence ID" value="ACN16251.1"/>
    <property type="molecule type" value="Genomic_DNA"/>
</dbReference>
<dbReference type="RefSeq" id="WP_015905013.1">
    <property type="nucleotide sequence ID" value="NC_012108.1"/>
</dbReference>
<dbReference type="SMR" id="C0QLE7"/>
<dbReference type="STRING" id="177437.HRM2_31700"/>
<dbReference type="KEGG" id="dat:HRM2_31700"/>
<dbReference type="eggNOG" id="COG0261">
    <property type="taxonomic scope" value="Bacteria"/>
</dbReference>
<dbReference type="HOGENOM" id="CLU_061463_3_2_7"/>
<dbReference type="OrthoDB" id="9813334at2"/>
<dbReference type="Proteomes" id="UP000000442">
    <property type="component" value="Chromosome"/>
</dbReference>
<dbReference type="GO" id="GO:0005737">
    <property type="term" value="C:cytoplasm"/>
    <property type="evidence" value="ECO:0007669"/>
    <property type="project" value="UniProtKB-ARBA"/>
</dbReference>
<dbReference type="GO" id="GO:1990904">
    <property type="term" value="C:ribonucleoprotein complex"/>
    <property type="evidence" value="ECO:0007669"/>
    <property type="project" value="UniProtKB-KW"/>
</dbReference>
<dbReference type="GO" id="GO:0005840">
    <property type="term" value="C:ribosome"/>
    <property type="evidence" value="ECO:0007669"/>
    <property type="project" value="UniProtKB-KW"/>
</dbReference>
<dbReference type="GO" id="GO:0019843">
    <property type="term" value="F:rRNA binding"/>
    <property type="evidence" value="ECO:0007669"/>
    <property type="project" value="UniProtKB-UniRule"/>
</dbReference>
<dbReference type="GO" id="GO:0003735">
    <property type="term" value="F:structural constituent of ribosome"/>
    <property type="evidence" value="ECO:0007669"/>
    <property type="project" value="InterPro"/>
</dbReference>
<dbReference type="GO" id="GO:0006412">
    <property type="term" value="P:translation"/>
    <property type="evidence" value="ECO:0007669"/>
    <property type="project" value="UniProtKB-UniRule"/>
</dbReference>
<dbReference type="HAMAP" id="MF_01363">
    <property type="entry name" value="Ribosomal_bL21"/>
    <property type="match status" value="1"/>
</dbReference>
<dbReference type="InterPro" id="IPR028909">
    <property type="entry name" value="bL21-like"/>
</dbReference>
<dbReference type="InterPro" id="IPR036164">
    <property type="entry name" value="bL21-like_sf"/>
</dbReference>
<dbReference type="InterPro" id="IPR001787">
    <property type="entry name" value="Ribosomal_bL21"/>
</dbReference>
<dbReference type="InterPro" id="IPR018258">
    <property type="entry name" value="Ribosomal_bL21_CS"/>
</dbReference>
<dbReference type="NCBIfam" id="TIGR00061">
    <property type="entry name" value="L21"/>
    <property type="match status" value="1"/>
</dbReference>
<dbReference type="PANTHER" id="PTHR21349">
    <property type="entry name" value="50S RIBOSOMAL PROTEIN L21"/>
    <property type="match status" value="1"/>
</dbReference>
<dbReference type="PANTHER" id="PTHR21349:SF0">
    <property type="entry name" value="LARGE RIBOSOMAL SUBUNIT PROTEIN BL21M"/>
    <property type="match status" value="1"/>
</dbReference>
<dbReference type="Pfam" id="PF00829">
    <property type="entry name" value="Ribosomal_L21p"/>
    <property type="match status" value="1"/>
</dbReference>
<dbReference type="SUPFAM" id="SSF141091">
    <property type="entry name" value="L21p-like"/>
    <property type="match status" value="1"/>
</dbReference>
<dbReference type="PROSITE" id="PS01169">
    <property type="entry name" value="RIBOSOMAL_L21"/>
    <property type="match status" value="1"/>
</dbReference>
<keyword id="KW-1185">Reference proteome</keyword>
<keyword id="KW-0687">Ribonucleoprotein</keyword>
<keyword id="KW-0689">Ribosomal protein</keyword>
<keyword id="KW-0694">RNA-binding</keyword>
<keyword id="KW-0699">rRNA-binding</keyword>
<proteinExistence type="inferred from homology"/>
<accession>C0QLE7</accession>